<gene>
    <name type="primary">GLIPR1L1</name>
    <name type="ORF">UNQ2972/PRO7434</name>
</gene>
<comment type="function">
    <text evidence="1 2">Required for optimal fertilization at the stage of sperm-oocyte fusion, plays a role in optimizing acrosome function, the translocation of IZUMO1 during the acrosome reaction and the fertilization process. Component of epididymosomes, one type of membranous microvesicules which mediate the transfer of lipids and proteins to spermatozoa plasma membrane during epididymal maturation. Also component of the CD9-positive microvesicules found in the cauda region.</text>
</comment>
<comment type="subunit">
    <text evidence="2">Part of a oolemmal binding multimeric complex (IZUMO1 complex) composed at least of IZUMO1 and GLIPR1L1; the complex assemblage is influenced by the maturation status of the male germ cell. Interacts with IZUMO1.</text>
</comment>
<comment type="subcellular location">
    <subcellularLocation>
        <location evidence="2">Cytoplasmic vesicle</location>
        <location evidence="2">Secretory vesicle</location>
        <location evidence="2">Acrosome</location>
    </subcellularLocation>
    <subcellularLocation>
        <location evidence="2">Cell membrane</location>
        <topology evidence="3">Lipid-anchor</topology>
        <topology evidence="3">GPI-anchor</topology>
        <orientation evidence="2">Extracellular side</orientation>
    </subcellularLocation>
    <subcellularLocation>
        <location evidence="1">Membrane raft</location>
    </subcellularLocation>
    <subcellularLocation>
        <location evidence="2">Secreted</location>
    </subcellularLocation>
    <text evidence="1 2">Located in the connecting piece of elongated spermatids and sperm. Also located in the apical region of the sperm head after sperm capacitation (By similarity). Weakly attached to the cell membrane and later secreted into the extracellular space (By similarity). Located on sperm equatorial segment and neck (By similarity). Associated with epididymosomes from the caput and cauda epididymis (By similarity).</text>
</comment>
<comment type="alternative products">
    <event type="alternative splicing"/>
    <isoform>
        <id>Q6UWM5-1</id>
        <name>1</name>
        <name>GLIPR1L1beta</name>
        <sequence type="displayed"/>
    </isoform>
    <isoform>
        <id>Q6UWM5-2</id>
        <name>2</name>
        <name>GLIPR1L1alpha</name>
        <sequence type="described" ref="VSP_022456"/>
    </isoform>
</comment>
<comment type="tissue specificity">
    <text evidence="6">Highly expressed in testis.</text>
</comment>
<comment type="PTM">
    <text evidence="1">N-glycosylated. N-glycosylation decreases during the transit in the caput.</text>
</comment>
<comment type="similarity">
    <text evidence="9">Belongs to the CRISP family.</text>
</comment>
<accession>Q6UWM5</accession>
<accession>Q96L06</accession>
<sequence>MALKNKFSCLWILGLCLVATTSSKIPSITDPHFIDNCIEAHNEWRGKVNPPAADMKYMIWDKGLAKMAKAWANQCKFEHNDCLDKSYKCYAAFEYVGENIWLGGIKSFTPRHAITAWYNETQFYDFDSLSCSRVCGHYTQLVWANSFYVGCAVAMCPNLGGASTAIFVCNYGPAGNFANMPPYVRGESCSLCSKEEKCVKNLCRTPQLIIPNQNPFLKPTGRAPQQTAFNPFSLGFLLLRIF</sequence>
<protein>
    <recommendedName>
        <fullName>GLIPR1-like protein 1</fullName>
    </recommendedName>
</protein>
<reference key="1">
    <citation type="journal article" date="2006" name="Genomics">
        <title>Identification and characterization of RTVP1/GLIPR1-like genes, a novel p53 target gene cluster.</title>
        <authorList>
            <person name="Ren C."/>
            <person name="Ren C.-H."/>
            <person name="Li L."/>
            <person name="Goltsov A.A."/>
            <person name="Thompson T.C."/>
        </authorList>
    </citation>
    <scope>NUCLEOTIDE SEQUENCE [MRNA] (ISOFORMS 1 AND 2)</scope>
    <scope>TISSUE SPECIFICITY</scope>
    <source>
        <tissue>Testis</tissue>
    </source>
</reference>
<reference key="2">
    <citation type="journal article" date="2003" name="Genome Res.">
        <title>The secreted protein discovery initiative (SPDI), a large-scale effort to identify novel human secreted and transmembrane proteins: a bioinformatics assessment.</title>
        <authorList>
            <person name="Clark H.F."/>
            <person name="Gurney A.L."/>
            <person name="Abaya E."/>
            <person name="Baker K."/>
            <person name="Baldwin D.T."/>
            <person name="Brush J."/>
            <person name="Chen J."/>
            <person name="Chow B."/>
            <person name="Chui C."/>
            <person name="Crowley C."/>
            <person name="Currell B."/>
            <person name="Deuel B."/>
            <person name="Dowd P."/>
            <person name="Eaton D."/>
            <person name="Foster J.S."/>
            <person name="Grimaldi C."/>
            <person name="Gu Q."/>
            <person name="Hass P.E."/>
            <person name="Heldens S."/>
            <person name="Huang A."/>
            <person name="Kim H.S."/>
            <person name="Klimowski L."/>
            <person name="Jin Y."/>
            <person name="Johnson S."/>
            <person name="Lee J."/>
            <person name="Lewis L."/>
            <person name="Liao D."/>
            <person name="Mark M.R."/>
            <person name="Robbie E."/>
            <person name="Sanchez C."/>
            <person name="Schoenfeld J."/>
            <person name="Seshagiri S."/>
            <person name="Simmons L."/>
            <person name="Singh J."/>
            <person name="Smith V."/>
            <person name="Stinson J."/>
            <person name="Vagts A."/>
            <person name="Vandlen R.L."/>
            <person name="Watanabe C."/>
            <person name="Wieand D."/>
            <person name="Woods K."/>
            <person name="Xie M.-H."/>
            <person name="Yansura D.G."/>
            <person name="Yi S."/>
            <person name="Yu G."/>
            <person name="Yuan J."/>
            <person name="Zhang M."/>
            <person name="Zhang Z."/>
            <person name="Goddard A.D."/>
            <person name="Wood W.I."/>
            <person name="Godowski P.J."/>
            <person name="Gray A.M."/>
        </authorList>
    </citation>
    <scope>NUCLEOTIDE SEQUENCE [LARGE SCALE MRNA] (ISOFORM 1)</scope>
</reference>
<reference key="3">
    <citation type="journal article" date="2004" name="Genome Res.">
        <title>The status, quality, and expansion of the NIH full-length cDNA project: the Mammalian Gene Collection (MGC).</title>
        <authorList>
            <consortium name="The MGC Project Team"/>
        </authorList>
    </citation>
    <scope>NUCLEOTIDE SEQUENCE [LARGE SCALE MRNA] (ISOFORM 2)</scope>
    <source>
        <tissue>Testis</tissue>
    </source>
</reference>
<reference key="4">
    <citation type="journal article" date="2004" name="Protein Sci.">
        <title>Signal peptide prediction based on analysis of experimentally verified cleavage sites.</title>
        <authorList>
            <person name="Zhang Z."/>
            <person name="Henzel W.J."/>
        </authorList>
    </citation>
    <scope>PROTEIN SEQUENCE OF 23-37</scope>
</reference>
<organism>
    <name type="scientific">Homo sapiens</name>
    <name type="common">Human</name>
    <dbReference type="NCBI Taxonomy" id="9606"/>
    <lineage>
        <taxon>Eukaryota</taxon>
        <taxon>Metazoa</taxon>
        <taxon>Chordata</taxon>
        <taxon>Craniata</taxon>
        <taxon>Vertebrata</taxon>
        <taxon>Euteleostomi</taxon>
        <taxon>Mammalia</taxon>
        <taxon>Eutheria</taxon>
        <taxon>Euarchontoglires</taxon>
        <taxon>Primates</taxon>
        <taxon>Haplorrhini</taxon>
        <taxon>Catarrhini</taxon>
        <taxon>Hominidae</taxon>
        <taxon>Homo</taxon>
    </lineage>
</organism>
<dbReference type="EMBL" id="AY358731">
    <property type="protein sequence ID" value="AAQ89093.1"/>
    <property type="molecule type" value="mRNA"/>
</dbReference>
<dbReference type="EMBL" id="BC014603">
    <property type="protein sequence ID" value="AAH14603.1"/>
    <property type="molecule type" value="mRNA"/>
</dbReference>
<dbReference type="CCDS" id="CCDS76578.1">
    <molecule id="Q6UWM5-1"/>
</dbReference>
<dbReference type="CCDS" id="CCDS9009.1">
    <molecule id="Q6UWM5-2"/>
</dbReference>
<dbReference type="RefSeq" id="NP_001291893.1">
    <molecule id="Q6UWM5-1"/>
    <property type="nucleotide sequence ID" value="NM_001304964.2"/>
</dbReference>
<dbReference type="RefSeq" id="NP_689992.1">
    <molecule id="Q6UWM5-2"/>
    <property type="nucleotide sequence ID" value="NM_152779.4"/>
</dbReference>
<dbReference type="SMR" id="Q6UWM5"/>
<dbReference type="BioGRID" id="129177">
    <property type="interactions" value="2"/>
</dbReference>
<dbReference type="FunCoup" id="Q6UWM5">
    <property type="interactions" value="2"/>
</dbReference>
<dbReference type="STRING" id="9606.ENSP00000367967"/>
<dbReference type="GlyCosmos" id="Q6UWM5">
    <property type="glycosylation" value="1 site, No reported glycans"/>
</dbReference>
<dbReference type="GlyGen" id="Q6UWM5">
    <property type="glycosylation" value="1 site"/>
</dbReference>
<dbReference type="iPTMnet" id="Q6UWM5"/>
<dbReference type="PhosphoSitePlus" id="Q6UWM5"/>
<dbReference type="BioMuta" id="GLIPR1L1"/>
<dbReference type="DMDM" id="124007190"/>
<dbReference type="MassIVE" id="Q6UWM5"/>
<dbReference type="PaxDb" id="9606-ENSP00000310770"/>
<dbReference type="PeptideAtlas" id="Q6UWM5"/>
<dbReference type="ProteomicsDB" id="67498">
    <molecule id="Q6UWM5-1"/>
</dbReference>
<dbReference type="ProteomicsDB" id="67499">
    <molecule id="Q6UWM5-2"/>
</dbReference>
<dbReference type="Antibodypedia" id="29594">
    <property type="antibodies" value="168 antibodies from 25 providers"/>
</dbReference>
<dbReference type="DNASU" id="256710"/>
<dbReference type="Ensembl" id="ENST00000312442.2">
    <molecule id="Q6UWM5-2"/>
    <property type="protein sequence ID" value="ENSP00000310770.2"/>
    <property type="gene ID" value="ENSG00000173401.10"/>
</dbReference>
<dbReference type="Ensembl" id="ENST00000378695.9">
    <molecule id="Q6UWM5-1"/>
    <property type="protein sequence ID" value="ENSP00000367967.4"/>
    <property type="gene ID" value="ENSG00000173401.10"/>
</dbReference>
<dbReference type="GeneID" id="256710"/>
<dbReference type="KEGG" id="hsa:256710"/>
<dbReference type="MANE-Select" id="ENST00000378695.9">
    <property type="protein sequence ID" value="ENSP00000367967.4"/>
    <property type="RefSeq nucleotide sequence ID" value="NM_001304964.2"/>
    <property type="RefSeq protein sequence ID" value="NP_001291893.1"/>
</dbReference>
<dbReference type="UCSC" id="uc001sxn.4">
    <molecule id="Q6UWM5-1"/>
    <property type="organism name" value="human"/>
</dbReference>
<dbReference type="AGR" id="HGNC:28392"/>
<dbReference type="CTD" id="256710"/>
<dbReference type="DisGeNET" id="256710"/>
<dbReference type="GeneCards" id="GLIPR1L1"/>
<dbReference type="HGNC" id="HGNC:28392">
    <property type="gene designation" value="GLIPR1L1"/>
</dbReference>
<dbReference type="HPA" id="ENSG00000173401">
    <property type="expression patterns" value="Tissue enriched (testis)"/>
</dbReference>
<dbReference type="MIM" id="610395">
    <property type="type" value="gene"/>
</dbReference>
<dbReference type="neXtProt" id="NX_Q6UWM5"/>
<dbReference type="OpenTargets" id="ENSG00000173401"/>
<dbReference type="PharmGKB" id="PA145008265"/>
<dbReference type="VEuPathDB" id="HostDB:ENSG00000173401"/>
<dbReference type="eggNOG" id="KOG3017">
    <property type="taxonomic scope" value="Eukaryota"/>
</dbReference>
<dbReference type="GeneTree" id="ENSGT00940000162547"/>
<dbReference type="HOGENOM" id="CLU_035730_2_0_1"/>
<dbReference type="InParanoid" id="Q6UWM5"/>
<dbReference type="OMA" id="ACKFEHN"/>
<dbReference type="OrthoDB" id="43654at2759"/>
<dbReference type="PAN-GO" id="Q6UWM5">
    <property type="GO annotations" value="1 GO annotation based on evolutionary models"/>
</dbReference>
<dbReference type="PhylomeDB" id="Q6UWM5"/>
<dbReference type="TreeFam" id="TF316148"/>
<dbReference type="PathwayCommons" id="Q6UWM5"/>
<dbReference type="BioGRID-ORCS" id="256710">
    <property type="hits" value="15 hits in 1142 CRISPR screens"/>
</dbReference>
<dbReference type="GenomeRNAi" id="256710"/>
<dbReference type="Pharos" id="Q6UWM5">
    <property type="development level" value="Tdark"/>
</dbReference>
<dbReference type="PRO" id="PR:Q6UWM5"/>
<dbReference type="Proteomes" id="UP000005640">
    <property type="component" value="Chromosome 12"/>
</dbReference>
<dbReference type="RNAct" id="Q6UWM5">
    <property type="molecule type" value="protein"/>
</dbReference>
<dbReference type="Bgee" id="ENSG00000173401">
    <property type="expression patterns" value="Expressed in sperm and 97 other cell types or tissues"/>
</dbReference>
<dbReference type="GO" id="GO:0001669">
    <property type="term" value="C:acrosomal vesicle"/>
    <property type="evidence" value="ECO:0000250"/>
    <property type="project" value="UniProtKB"/>
</dbReference>
<dbReference type="GO" id="GO:0005615">
    <property type="term" value="C:extracellular space"/>
    <property type="evidence" value="ECO:0000318"/>
    <property type="project" value="GO_Central"/>
</dbReference>
<dbReference type="GO" id="GO:0045121">
    <property type="term" value="C:membrane raft"/>
    <property type="evidence" value="ECO:0007669"/>
    <property type="project" value="UniProtKB-SubCell"/>
</dbReference>
<dbReference type="GO" id="GO:0005886">
    <property type="term" value="C:plasma membrane"/>
    <property type="evidence" value="ECO:0007669"/>
    <property type="project" value="UniProtKB-SubCell"/>
</dbReference>
<dbReference type="GO" id="GO:0098635">
    <property type="term" value="C:protein complex involved in cell-cell adhesion"/>
    <property type="evidence" value="ECO:0000250"/>
    <property type="project" value="UniProtKB"/>
</dbReference>
<dbReference type="GO" id="GO:0098552">
    <property type="term" value="C:side of membrane"/>
    <property type="evidence" value="ECO:0007669"/>
    <property type="project" value="UniProtKB-KW"/>
</dbReference>
<dbReference type="GO" id="GO:0007342">
    <property type="term" value="P:fusion of sperm to egg plasma membrane involved in single fertilization"/>
    <property type="evidence" value="ECO:0000250"/>
    <property type="project" value="UniProtKB"/>
</dbReference>
<dbReference type="GO" id="GO:0019953">
    <property type="term" value="P:sexual reproduction"/>
    <property type="evidence" value="ECO:0000318"/>
    <property type="project" value="GO_Central"/>
</dbReference>
<dbReference type="CDD" id="cd05385">
    <property type="entry name" value="CAP_GLIPR1-like"/>
    <property type="match status" value="1"/>
</dbReference>
<dbReference type="FunFam" id="3.40.33.10:FF:000008">
    <property type="entry name" value="GLI pathogenesis-related 1 (Glioma)"/>
    <property type="match status" value="1"/>
</dbReference>
<dbReference type="Gene3D" id="3.40.33.10">
    <property type="entry name" value="CAP"/>
    <property type="match status" value="1"/>
</dbReference>
<dbReference type="InterPro" id="IPR018244">
    <property type="entry name" value="Allrgn_V5/Tpx1_CS"/>
</dbReference>
<dbReference type="InterPro" id="IPR014044">
    <property type="entry name" value="CAP_dom"/>
</dbReference>
<dbReference type="InterPro" id="IPR035940">
    <property type="entry name" value="CAP_sf"/>
</dbReference>
<dbReference type="InterPro" id="IPR001283">
    <property type="entry name" value="CRISP-related"/>
</dbReference>
<dbReference type="InterPro" id="IPR034121">
    <property type="entry name" value="SCP_GLIPR-1-like"/>
</dbReference>
<dbReference type="InterPro" id="IPR002413">
    <property type="entry name" value="V5_allergen-like"/>
</dbReference>
<dbReference type="PANTHER" id="PTHR10334">
    <property type="entry name" value="CYSTEINE-RICH SECRETORY PROTEIN-RELATED"/>
    <property type="match status" value="1"/>
</dbReference>
<dbReference type="Pfam" id="PF00188">
    <property type="entry name" value="CAP"/>
    <property type="match status" value="1"/>
</dbReference>
<dbReference type="PRINTS" id="PR00838">
    <property type="entry name" value="V5ALLERGEN"/>
</dbReference>
<dbReference type="PRINTS" id="PR00837">
    <property type="entry name" value="V5TPXLIKE"/>
</dbReference>
<dbReference type="SMART" id="SM00198">
    <property type="entry name" value="SCP"/>
    <property type="match status" value="1"/>
</dbReference>
<dbReference type="SUPFAM" id="SSF55797">
    <property type="entry name" value="PR-1-like"/>
    <property type="match status" value="1"/>
</dbReference>
<dbReference type="PROSITE" id="PS01009">
    <property type="entry name" value="CRISP_1"/>
    <property type="match status" value="1"/>
</dbReference>
<dbReference type="PROSITE" id="PS01010">
    <property type="entry name" value="CRISP_2"/>
    <property type="match status" value="1"/>
</dbReference>
<proteinExistence type="evidence at protein level"/>
<evidence type="ECO:0000250" key="1">
    <source>
        <dbReference type="UniProtKB" id="Q32LB5"/>
    </source>
</evidence>
<evidence type="ECO:0000250" key="2">
    <source>
        <dbReference type="UniProtKB" id="Q9DAG6"/>
    </source>
</evidence>
<evidence type="ECO:0000255" key="3"/>
<evidence type="ECO:0000255" key="4">
    <source>
        <dbReference type="PROSITE-ProRule" id="PRU00498"/>
    </source>
</evidence>
<evidence type="ECO:0000269" key="5">
    <source>
    </source>
</evidence>
<evidence type="ECO:0000269" key="6">
    <source>
    </source>
</evidence>
<evidence type="ECO:0000303" key="7">
    <source>
    </source>
</evidence>
<evidence type="ECO:0000303" key="8">
    <source>
    </source>
</evidence>
<evidence type="ECO:0000305" key="9"/>
<keyword id="KW-0025">Alternative splicing</keyword>
<keyword id="KW-1003">Cell membrane</keyword>
<keyword id="KW-0968">Cytoplasmic vesicle</keyword>
<keyword id="KW-0903">Direct protein sequencing</keyword>
<keyword id="KW-0278">Fertilization</keyword>
<keyword id="KW-0325">Glycoprotein</keyword>
<keyword id="KW-0336">GPI-anchor</keyword>
<keyword id="KW-0449">Lipoprotein</keyword>
<keyword id="KW-0472">Membrane</keyword>
<keyword id="KW-1267">Proteomics identification</keyword>
<keyword id="KW-1185">Reference proteome</keyword>
<keyword id="KW-0964">Secreted</keyword>
<keyword id="KW-0732">Signal</keyword>
<feature type="signal peptide" evidence="5">
    <location>
        <begin position="1"/>
        <end position="22"/>
    </location>
</feature>
<feature type="chain" id="PRO_0000272653" description="GLIPR1-like protein 1">
    <location>
        <begin position="23"/>
        <end position="221"/>
    </location>
</feature>
<feature type="propeptide" id="PRO_0000441107" description="Removed in mature form" evidence="9">
    <location>
        <begin position="222"/>
        <end position="242"/>
    </location>
</feature>
<feature type="domain" description="SCP" evidence="3">
    <location>
        <begin position="39"/>
        <end position="171"/>
    </location>
</feature>
<feature type="lipid moiety-binding region" description="GPI-anchor amidated glycine" evidence="3">
    <location>
        <position position="221"/>
    </location>
</feature>
<feature type="glycosylation site" description="N-linked (GlcNAc...) asparagine" evidence="4">
    <location>
        <position position="119"/>
    </location>
</feature>
<feature type="splice variant" id="VSP_022456" description="In isoform 2." evidence="7 8">
    <original>RTPQLIIPNQ</original>
    <variation>K</variation>
    <location>
        <begin position="204"/>
        <end position="213"/>
    </location>
</feature>
<feature type="sequence conflict" description="In Ref. 2; AAQ89093." evidence="9" ref="2">
    <original>V</original>
    <variation>A</variation>
    <location>
        <position position="184"/>
    </location>
</feature>
<name>GPRL1_HUMAN</name>